<gene>
    <name evidence="1" type="primary">dxs</name>
    <name type="ordered locus">SYNAS_17860</name>
    <name type="ORF">SYN_02456</name>
</gene>
<feature type="chain" id="PRO_0000256491" description="1-deoxy-D-xylulose-5-phosphate synthase">
    <location>
        <begin position="1"/>
        <end position="650"/>
    </location>
</feature>
<feature type="binding site" evidence="1">
    <location>
        <position position="87"/>
    </location>
    <ligand>
        <name>thiamine diphosphate</name>
        <dbReference type="ChEBI" id="CHEBI:58937"/>
    </ligand>
</feature>
<feature type="binding site" evidence="1">
    <location>
        <begin position="128"/>
        <end position="130"/>
    </location>
    <ligand>
        <name>thiamine diphosphate</name>
        <dbReference type="ChEBI" id="CHEBI:58937"/>
    </ligand>
</feature>
<feature type="binding site" evidence="1">
    <location>
        <position position="159"/>
    </location>
    <ligand>
        <name>Mg(2+)</name>
        <dbReference type="ChEBI" id="CHEBI:18420"/>
    </ligand>
</feature>
<feature type="binding site" evidence="1">
    <location>
        <begin position="160"/>
        <end position="161"/>
    </location>
    <ligand>
        <name>thiamine diphosphate</name>
        <dbReference type="ChEBI" id="CHEBI:58937"/>
    </ligand>
</feature>
<feature type="binding site" evidence="1">
    <location>
        <position position="188"/>
    </location>
    <ligand>
        <name>Mg(2+)</name>
        <dbReference type="ChEBI" id="CHEBI:18420"/>
    </ligand>
</feature>
<feature type="binding site" evidence="1">
    <location>
        <position position="188"/>
    </location>
    <ligand>
        <name>thiamine diphosphate</name>
        <dbReference type="ChEBI" id="CHEBI:58937"/>
    </ligand>
</feature>
<feature type="binding site" evidence="1">
    <location>
        <position position="299"/>
    </location>
    <ligand>
        <name>thiamine diphosphate</name>
        <dbReference type="ChEBI" id="CHEBI:58937"/>
    </ligand>
</feature>
<feature type="binding site" evidence="1">
    <location>
        <position position="383"/>
    </location>
    <ligand>
        <name>thiamine diphosphate</name>
        <dbReference type="ChEBI" id="CHEBI:58937"/>
    </ligand>
</feature>
<sequence length="650" mass="70930">MFISSMNPVKKNNSGGILSRIQFPEDIRMLDIGDLTLLASDIRSAIIETVSRTGGHLASSLGTVELTLAVHKVFDTPKDRVIWDVGHQAYAHKLITGRRDVFSTLRQKGGISGFPKREESPYDVFNVGHSSTSISAASGIAEARDLKKERFKVVAIIGDGSMTAGLAFEGLNWSGDRKKDLVIILNDNEMSISPNVGALSSYLNHIMTGQTANKIRKDIRNFLKTIPSIGEQVLEFSRRAEESLKALIVPGALFEDLGFTYVGPLEGHRLDHLIRNLEDVRNMEGPVLVHVITRKGKGYKFAEAEPLRFHGICPFSPETGKPAAASESPVPPSYTQVFGNTIVKLARQNPRLVAITAAMCEGTGLNAFAEEFPERFFDVGIAEQHSVTFAAGLATEGILPVVAIYSSFLQRAYDQILHDVCLQNLPVVFALDRAGFVGEDGPTHHGLFDLSYLRSIPNMVVMAPKDENELQHMLHTAVACGKPAAVRYPRGSGVGVTMDSQPFSLELGKGEVLCEGGSLAILAVGDPVHPALTAAVQLREEGIYATVVNARFVKPLDRELLLRIVRSFKKILTVEENVLTGGFGSAILEFLEENDIHGIQVKRLGIRDEFAEQATQAEQRRLYGIDEQGIAAAVRSMMNMGRSSQMEACL</sequence>
<comment type="function">
    <text evidence="1">Catalyzes the acyloin condensation reaction between C atoms 2 and 3 of pyruvate and glyceraldehyde 3-phosphate to yield 1-deoxy-D-xylulose-5-phosphate (DXP).</text>
</comment>
<comment type="catalytic activity">
    <reaction evidence="1">
        <text>D-glyceraldehyde 3-phosphate + pyruvate + H(+) = 1-deoxy-D-xylulose 5-phosphate + CO2</text>
        <dbReference type="Rhea" id="RHEA:12605"/>
        <dbReference type="ChEBI" id="CHEBI:15361"/>
        <dbReference type="ChEBI" id="CHEBI:15378"/>
        <dbReference type="ChEBI" id="CHEBI:16526"/>
        <dbReference type="ChEBI" id="CHEBI:57792"/>
        <dbReference type="ChEBI" id="CHEBI:59776"/>
        <dbReference type="EC" id="2.2.1.7"/>
    </reaction>
</comment>
<comment type="cofactor">
    <cofactor evidence="1">
        <name>Mg(2+)</name>
        <dbReference type="ChEBI" id="CHEBI:18420"/>
    </cofactor>
    <text evidence="1">Binds 1 Mg(2+) ion per subunit.</text>
</comment>
<comment type="cofactor">
    <cofactor evidence="1">
        <name>thiamine diphosphate</name>
        <dbReference type="ChEBI" id="CHEBI:58937"/>
    </cofactor>
    <text evidence="1">Binds 1 thiamine pyrophosphate per subunit.</text>
</comment>
<comment type="pathway">
    <text evidence="1">Metabolic intermediate biosynthesis; 1-deoxy-D-xylulose 5-phosphate biosynthesis; 1-deoxy-D-xylulose 5-phosphate from D-glyceraldehyde 3-phosphate and pyruvate: step 1/1.</text>
</comment>
<comment type="subunit">
    <text evidence="1">Homodimer.</text>
</comment>
<comment type="similarity">
    <text evidence="1">Belongs to the transketolase family. DXPS subfamily.</text>
</comment>
<organism>
    <name type="scientific">Syntrophus aciditrophicus (strain SB)</name>
    <dbReference type="NCBI Taxonomy" id="56780"/>
    <lineage>
        <taxon>Bacteria</taxon>
        <taxon>Pseudomonadati</taxon>
        <taxon>Thermodesulfobacteriota</taxon>
        <taxon>Syntrophia</taxon>
        <taxon>Syntrophales</taxon>
        <taxon>Syntrophaceae</taxon>
        <taxon>Syntrophus</taxon>
    </lineage>
</organism>
<proteinExistence type="inferred from homology"/>
<dbReference type="EC" id="2.2.1.7" evidence="1"/>
<dbReference type="EMBL" id="CP000252">
    <property type="protein sequence ID" value="ABC77665.1"/>
    <property type="molecule type" value="Genomic_DNA"/>
</dbReference>
<dbReference type="RefSeq" id="WP_011417687.1">
    <property type="nucleotide sequence ID" value="NC_007759.1"/>
</dbReference>
<dbReference type="SMR" id="Q2LUA7"/>
<dbReference type="FunCoup" id="Q2LUA7">
    <property type="interactions" value="473"/>
</dbReference>
<dbReference type="STRING" id="56780.SYN_02456"/>
<dbReference type="KEGG" id="sat:SYN_02456"/>
<dbReference type="eggNOG" id="COG1154">
    <property type="taxonomic scope" value="Bacteria"/>
</dbReference>
<dbReference type="HOGENOM" id="CLU_009227_1_4_7"/>
<dbReference type="InParanoid" id="Q2LUA7"/>
<dbReference type="OrthoDB" id="9803371at2"/>
<dbReference type="UniPathway" id="UPA00064">
    <property type="reaction ID" value="UER00091"/>
</dbReference>
<dbReference type="Proteomes" id="UP000001933">
    <property type="component" value="Chromosome"/>
</dbReference>
<dbReference type="GO" id="GO:0005829">
    <property type="term" value="C:cytosol"/>
    <property type="evidence" value="ECO:0007669"/>
    <property type="project" value="TreeGrafter"/>
</dbReference>
<dbReference type="GO" id="GO:0008661">
    <property type="term" value="F:1-deoxy-D-xylulose-5-phosphate synthase activity"/>
    <property type="evidence" value="ECO:0007669"/>
    <property type="project" value="UniProtKB-UniRule"/>
</dbReference>
<dbReference type="GO" id="GO:0000287">
    <property type="term" value="F:magnesium ion binding"/>
    <property type="evidence" value="ECO:0007669"/>
    <property type="project" value="UniProtKB-UniRule"/>
</dbReference>
<dbReference type="GO" id="GO:0030976">
    <property type="term" value="F:thiamine pyrophosphate binding"/>
    <property type="evidence" value="ECO:0007669"/>
    <property type="project" value="UniProtKB-UniRule"/>
</dbReference>
<dbReference type="GO" id="GO:0052865">
    <property type="term" value="P:1-deoxy-D-xylulose 5-phosphate biosynthetic process"/>
    <property type="evidence" value="ECO:0007669"/>
    <property type="project" value="UniProtKB-UniPathway"/>
</dbReference>
<dbReference type="GO" id="GO:0019288">
    <property type="term" value="P:isopentenyl diphosphate biosynthetic process, methylerythritol 4-phosphate pathway"/>
    <property type="evidence" value="ECO:0007669"/>
    <property type="project" value="TreeGrafter"/>
</dbReference>
<dbReference type="GO" id="GO:0016114">
    <property type="term" value="P:terpenoid biosynthetic process"/>
    <property type="evidence" value="ECO:0007669"/>
    <property type="project" value="UniProtKB-UniRule"/>
</dbReference>
<dbReference type="GO" id="GO:0009228">
    <property type="term" value="P:thiamine biosynthetic process"/>
    <property type="evidence" value="ECO:0007669"/>
    <property type="project" value="UniProtKB-UniRule"/>
</dbReference>
<dbReference type="CDD" id="cd02007">
    <property type="entry name" value="TPP_DXS"/>
    <property type="match status" value="1"/>
</dbReference>
<dbReference type="CDD" id="cd07033">
    <property type="entry name" value="TPP_PYR_DXS_TK_like"/>
    <property type="match status" value="1"/>
</dbReference>
<dbReference type="FunFam" id="3.40.50.920:FF:000002">
    <property type="entry name" value="1-deoxy-D-xylulose-5-phosphate synthase"/>
    <property type="match status" value="1"/>
</dbReference>
<dbReference type="FunFam" id="3.40.50.970:FF:000005">
    <property type="entry name" value="1-deoxy-D-xylulose-5-phosphate synthase"/>
    <property type="match status" value="1"/>
</dbReference>
<dbReference type="Gene3D" id="3.40.50.920">
    <property type="match status" value="1"/>
</dbReference>
<dbReference type="Gene3D" id="3.40.50.970">
    <property type="match status" value="2"/>
</dbReference>
<dbReference type="HAMAP" id="MF_00315">
    <property type="entry name" value="DXP_synth"/>
    <property type="match status" value="1"/>
</dbReference>
<dbReference type="InterPro" id="IPR005477">
    <property type="entry name" value="Dxylulose-5-P_synthase"/>
</dbReference>
<dbReference type="InterPro" id="IPR029061">
    <property type="entry name" value="THDP-binding"/>
</dbReference>
<dbReference type="InterPro" id="IPR009014">
    <property type="entry name" value="Transketo_C/PFOR_II"/>
</dbReference>
<dbReference type="InterPro" id="IPR005475">
    <property type="entry name" value="Transketolase-like_Pyr-bd"/>
</dbReference>
<dbReference type="InterPro" id="IPR020826">
    <property type="entry name" value="Transketolase_BS"/>
</dbReference>
<dbReference type="InterPro" id="IPR033248">
    <property type="entry name" value="Transketolase_C"/>
</dbReference>
<dbReference type="InterPro" id="IPR049557">
    <property type="entry name" value="Transketolase_CS"/>
</dbReference>
<dbReference type="NCBIfam" id="TIGR00204">
    <property type="entry name" value="dxs"/>
    <property type="match status" value="1"/>
</dbReference>
<dbReference type="NCBIfam" id="NF003933">
    <property type="entry name" value="PRK05444.2-2"/>
    <property type="match status" value="1"/>
</dbReference>
<dbReference type="PANTHER" id="PTHR43322">
    <property type="entry name" value="1-D-DEOXYXYLULOSE 5-PHOSPHATE SYNTHASE-RELATED"/>
    <property type="match status" value="1"/>
</dbReference>
<dbReference type="PANTHER" id="PTHR43322:SF5">
    <property type="entry name" value="1-DEOXY-D-XYLULOSE-5-PHOSPHATE SYNTHASE, CHLOROPLASTIC"/>
    <property type="match status" value="1"/>
</dbReference>
<dbReference type="Pfam" id="PF13292">
    <property type="entry name" value="DXP_synthase_N"/>
    <property type="match status" value="1"/>
</dbReference>
<dbReference type="Pfam" id="PF02779">
    <property type="entry name" value="Transket_pyr"/>
    <property type="match status" value="1"/>
</dbReference>
<dbReference type="Pfam" id="PF02780">
    <property type="entry name" value="Transketolase_C"/>
    <property type="match status" value="1"/>
</dbReference>
<dbReference type="SMART" id="SM00861">
    <property type="entry name" value="Transket_pyr"/>
    <property type="match status" value="1"/>
</dbReference>
<dbReference type="SUPFAM" id="SSF52518">
    <property type="entry name" value="Thiamin diphosphate-binding fold (THDP-binding)"/>
    <property type="match status" value="2"/>
</dbReference>
<dbReference type="SUPFAM" id="SSF52922">
    <property type="entry name" value="TK C-terminal domain-like"/>
    <property type="match status" value="1"/>
</dbReference>
<dbReference type="PROSITE" id="PS00801">
    <property type="entry name" value="TRANSKETOLASE_1"/>
    <property type="match status" value="1"/>
</dbReference>
<dbReference type="PROSITE" id="PS00802">
    <property type="entry name" value="TRANSKETOLASE_2"/>
    <property type="match status" value="1"/>
</dbReference>
<reference key="1">
    <citation type="journal article" date="2007" name="Proc. Natl. Acad. Sci. U.S.A.">
        <title>The genome of Syntrophus aciditrophicus: life at the thermodynamic limit of microbial growth.</title>
        <authorList>
            <person name="McInerney M.J."/>
            <person name="Rohlin L."/>
            <person name="Mouttaki H."/>
            <person name="Kim U."/>
            <person name="Krupp R.S."/>
            <person name="Rios-Hernandez L."/>
            <person name="Sieber J."/>
            <person name="Struchtemeyer C.G."/>
            <person name="Bhattacharyya A."/>
            <person name="Campbell J.W."/>
            <person name="Gunsalus R.P."/>
        </authorList>
    </citation>
    <scope>NUCLEOTIDE SEQUENCE [LARGE SCALE GENOMIC DNA]</scope>
    <source>
        <strain>SB</strain>
    </source>
</reference>
<accession>Q2LUA7</accession>
<protein>
    <recommendedName>
        <fullName evidence="1">1-deoxy-D-xylulose-5-phosphate synthase</fullName>
        <ecNumber evidence="1">2.2.1.7</ecNumber>
    </recommendedName>
    <alternativeName>
        <fullName evidence="1">1-deoxyxylulose-5-phosphate synthase</fullName>
        <shortName evidence="1">DXP synthase</shortName>
        <shortName evidence="1">DXPS</shortName>
    </alternativeName>
</protein>
<keyword id="KW-0414">Isoprene biosynthesis</keyword>
<keyword id="KW-0460">Magnesium</keyword>
<keyword id="KW-0479">Metal-binding</keyword>
<keyword id="KW-1185">Reference proteome</keyword>
<keyword id="KW-0784">Thiamine biosynthesis</keyword>
<keyword id="KW-0786">Thiamine pyrophosphate</keyword>
<keyword id="KW-0808">Transferase</keyword>
<name>DXS_SYNAS</name>
<evidence type="ECO:0000255" key="1">
    <source>
        <dbReference type="HAMAP-Rule" id="MF_00315"/>
    </source>
</evidence>